<gene>
    <name type="primary">pbuO</name>
    <name type="synonym">ytiP</name>
    <name type="ordered locus">BSU29990</name>
</gene>
<reference key="1">
    <citation type="journal article" date="1997" name="Microbiology">
        <title>Sequencing and functional annotation of the Bacillus subtilis genes in the 200 kb rrnB-dnaB region.</title>
        <authorList>
            <person name="Lapidus A."/>
            <person name="Galleron N."/>
            <person name="Sorokin A."/>
            <person name="Ehrlich S.D."/>
        </authorList>
    </citation>
    <scope>NUCLEOTIDE SEQUENCE [GENOMIC DNA]</scope>
    <source>
        <strain>168</strain>
    </source>
</reference>
<reference key="2">
    <citation type="journal article" date="1997" name="Nature">
        <title>The complete genome sequence of the Gram-positive bacterium Bacillus subtilis.</title>
        <authorList>
            <person name="Kunst F."/>
            <person name="Ogasawara N."/>
            <person name="Moszer I."/>
            <person name="Albertini A.M."/>
            <person name="Alloni G."/>
            <person name="Azevedo V."/>
            <person name="Bertero M.G."/>
            <person name="Bessieres P."/>
            <person name="Bolotin A."/>
            <person name="Borchert S."/>
            <person name="Borriss R."/>
            <person name="Boursier L."/>
            <person name="Brans A."/>
            <person name="Braun M."/>
            <person name="Brignell S.C."/>
            <person name="Bron S."/>
            <person name="Brouillet S."/>
            <person name="Bruschi C.V."/>
            <person name="Caldwell B."/>
            <person name="Capuano V."/>
            <person name="Carter N.M."/>
            <person name="Choi S.-K."/>
            <person name="Codani J.-J."/>
            <person name="Connerton I.F."/>
            <person name="Cummings N.J."/>
            <person name="Daniel R.A."/>
            <person name="Denizot F."/>
            <person name="Devine K.M."/>
            <person name="Duesterhoeft A."/>
            <person name="Ehrlich S.D."/>
            <person name="Emmerson P.T."/>
            <person name="Entian K.-D."/>
            <person name="Errington J."/>
            <person name="Fabret C."/>
            <person name="Ferrari E."/>
            <person name="Foulger D."/>
            <person name="Fritz C."/>
            <person name="Fujita M."/>
            <person name="Fujita Y."/>
            <person name="Fuma S."/>
            <person name="Galizzi A."/>
            <person name="Galleron N."/>
            <person name="Ghim S.-Y."/>
            <person name="Glaser P."/>
            <person name="Goffeau A."/>
            <person name="Golightly E.J."/>
            <person name="Grandi G."/>
            <person name="Guiseppi G."/>
            <person name="Guy B.J."/>
            <person name="Haga K."/>
            <person name="Haiech J."/>
            <person name="Harwood C.R."/>
            <person name="Henaut A."/>
            <person name="Hilbert H."/>
            <person name="Holsappel S."/>
            <person name="Hosono S."/>
            <person name="Hullo M.-F."/>
            <person name="Itaya M."/>
            <person name="Jones L.-M."/>
            <person name="Joris B."/>
            <person name="Karamata D."/>
            <person name="Kasahara Y."/>
            <person name="Klaerr-Blanchard M."/>
            <person name="Klein C."/>
            <person name="Kobayashi Y."/>
            <person name="Koetter P."/>
            <person name="Koningstein G."/>
            <person name="Krogh S."/>
            <person name="Kumano M."/>
            <person name="Kurita K."/>
            <person name="Lapidus A."/>
            <person name="Lardinois S."/>
            <person name="Lauber J."/>
            <person name="Lazarevic V."/>
            <person name="Lee S.-M."/>
            <person name="Levine A."/>
            <person name="Liu H."/>
            <person name="Masuda S."/>
            <person name="Mauel C."/>
            <person name="Medigue C."/>
            <person name="Medina N."/>
            <person name="Mellado R.P."/>
            <person name="Mizuno M."/>
            <person name="Moestl D."/>
            <person name="Nakai S."/>
            <person name="Noback M."/>
            <person name="Noone D."/>
            <person name="O'Reilly M."/>
            <person name="Ogawa K."/>
            <person name="Ogiwara A."/>
            <person name="Oudega B."/>
            <person name="Park S.-H."/>
            <person name="Parro V."/>
            <person name="Pohl T.M."/>
            <person name="Portetelle D."/>
            <person name="Porwollik S."/>
            <person name="Prescott A.M."/>
            <person name="Presecan E."/>
            <person name="Pujic P."/>
            <person name="Purnelle B."/>
            <person name="Rapoport G."/>
            <person name="Rey M."/>
            <person name="Reynolds S."/>
            <person name="Rieger M."/>
            <person name="Rivolta C."/>
            <person name="Rocha E."/>
            <person name="Roche B."/>
            <person name="Rose M."/>
            <person name="Sadaie Y."/>
            <person name="Sato T."/>
            <person name="Scanlan E."/>
            <person name="Schleich S."/>
            <person name="Schroeter R."/>
            <person name="Scoffone F."/>
            <person name="Sekiguchi J."/>
            <person name="Sekowska A."/>
            <person name="Seror S.J."/>
            <person name="Serror P."/>
            <person name="Shin B.-S."/>
            <person name="Soldo B."/>
            <person name="Sorokin A."/>
            <person name="Tacconi E."/>
            <person name="Takagi T."/>
            <person name="Takahashi H."/>
            <person name="Takemaru K."/>
            <person name="Takeuchi M."/>
            <person name="Tamakoshi A."/>
            <person name="Tanaka T."/>
            <person name="Terpstra P."/>
            <person name="Tognoni A."/>
            <person name="Tosato V."/>
            <person name="Uchiyama S."/>
            <person name="Vandenbol M."/>
            <person name="Vannier F."/>
            <person name="Vassarotti A."/>
            <person name="Viari A."/>
            <person name="Wambutt R."/>
            <person name="Wedler E."/>
            <person name="Wedler H."/>
            <person name="Weitzenegger T."/>
            <person name="Winters P."/>
            <person name="Wipat A."/>
            <person name="Yamamoto H."/>
            <person name="Yamane K."/>
            <person name="Yasumoto K."/>
            <person name="Yata K."/>
            <person name="Yoshida K."/>
            <person name="Yoshikawa H.-F."/>
            <person name="Zumstein E."/>
            <person name="Yoshikawa H."/>
            <person name="Danchin A."/>
        </authorList>
    </citation>
    <scope>NUCLEOTIDE SEQUENCE [LARGE SCALE GENOMIC DNA]</scope>
    <source>
        <strain>168</strain>
    </source>
</reference>
<reference key="3">
    <citation type="journal article" date="2001" name="J. Bacteriol.">
        <title>Definition of the Bacillus subtilis PurR operator using genetic and bioinformatic tools and expansion of the PurR regulon with glyA, guaC, pbuG, xpt-pbuX, yqhZ-folD, and pbuO.</title>
        <authorList>
            <person name="Saxild H.H."/>
            <person name="Brunstedt K."/>
            <person name="Nielsen K.I."/>
            <person name="Jarmer H."/>
            <person name="Nygaard P."/>
        </authorList>
    </citation>
    <scope>FUNCTION IN PURINE UPTAKE</scope>
    <scope>INDUCTION</scope>
    <source>
        <strain>168</strain>
    </source>
</reference>
<comment type="function">
    <text evidence="2">Involved in the uptake of the purine bases hypoxanthine and guanine. May work at purine concentrations higher than 100 uM.</text>
</comment>
<comment type="subcellular location">
    <subcellularLocation>
        <location evidence="3">Cell membrane</location>
        <topology evidence="3">Multi-pass membrane protein</topology>
    </subcellularLocation>
</comment>
<comment type="induction">
    <text evidence="2">Expression is regulated by the purR regulon. Down-regulated by adenine and up-regulated by guanosine.</text>
</comment>
<comment type="similarity">
    <text evidence="3">Belongs to the nucleobase:cation symporter-2 (NCS2) (TC 2.A.40) family. Azg-like subfamily.</text>
</comment>
<protein>
    <recommendedName>
        <fullName>Guanine/hypoxanthine permease PbuO</fullName>
    </recommendedName>
</protein>
<organism>
    <name type="scientific">Bacillus subtilis (strain 168)</name>
    <dbReference type="NCBI Taxonomy" id="224308"/>
    <lineage>
        <taxon>Bacteria</taxon>
        <taxon>Bacillati</taxon>
        <taxon>Bacillota</taxon>
        <taxon>Bacilli</taxon>
        <taxon>Bacillales</taxon>
        <taxon>Bacillaceae</taxon>
        <taxon>Bacillus</taxon>
    </lineage>
</organism>
<dbReference type="EMBL" id="AF008220">
    <property type="protein sequence ID" value="AAC00391.1"/>
    <property type="molecule type" value="Genomic_DNA"/>
</dbReference>
<dbReference type="EMBL" id="AL009126">
    <property type="protein sequence ID" value="CAB14977.1"/>
    <property type="molecule type" value="Genomic_DNA"/>
</dbReference>
<dbReference type="PIR" id="G69993">
    <property type="entry name" value="G69993"/>
</dbReference>
<dbReference type="RefSeq" id="NP_390877.1">
    <property type="nucleotide sequence ID" value="NC_000964.3"/>
</dbReference>
<dbReference type="RefSeq" id="WP_003229234.1">
    <property type="nucleotide sequence ID" value="NZ_OZ025638.1"/>
</dbReference>
<dbReference type="SMR" id="O34978"/>
<dbReference type="FunCoup" id="O34978">
    <property type="interactions" value="602"/>
</dbReference>
<dbReference type="STRING" id="224308.BSU29990"/>
<dbReference type="PaxDb" id="224308-BSU29990"/>
<dbReference type="EnsemblBacteria" id="CAB14977">
    <property type="protein sequence ID" value="CAB14977"/>
    <property type="gene ID" value="BSU_29990"/>
</dbReference>
<dbReference type="GeneID" id="938070"/>
<dbReference type="KEGG" id="bsu:BSU29990"/>
<dbReference type="PATRIC" id="fig|224308.179.peg.3257"/>
<dbReference type="eggNOG" id="COG2252">
    <property type="taxonomic scope" value="Bacteria"/>
</dbReference>
<dbReference type="InParanoid" id="O34978"/>
<dbReference type="OrthoDB" id="9808458at2"/>
<dbReference type="PhylomeDB" id="O34978"/>
<dbReference type="BioCyc" id="BSUB:BSU29990-MONOMER"/>
<dbReference type="Proteomes" id="UP000001570">
    <property type="component" value="Chromosome"/>
</dbReference>
<dbReference type="GO" id="GO:0005886">
    <property type="term" value="C:plasma membrane"/>
    <property type="evidence" value="ECO:0000318"/>
    <property type="project" value="GO_Central"/>
</dbReference>
<dbReference type="GO" id="GO:0005345">
    <property type="term" value="F:purine nucleobase transmembrane transporter activity"/>
    <property type="evidence" value="ECO:0000318"/>
    <property type="project" value="GO_Central"/>
</dbReference>
<dbReference type="InterPro" id="IPR045018">
    <property type="entry name" value="Azg-like"/>
</dbReference>
<dbReference type="InterPro" id="IPR026033">
    <property type="entry name" value="Azg-like_bact_archaea"/>
</dbReference>
<dbReference type="InterPro" id="IPR006043">
    <property type="entry name" value="NCS2"/>
</dbReference>
<dbReference type="PANTHER" id="PTHR43337">
    <property type="entry name" value="XANTHINE/URACIL PERMEASE C887.17-RELATED"/>
    <property type="match status" value="1"/>
</dbReference>
<dbReference type="PANTHER" id="PTHR43337:SF1">
    <property type="entry name" value="XANTHINE_URACIL PERMEASE C887.17-RELATED"/>
    <property type="match status" value="1"/>
</dbReference>
<dbReference type="Pfam" id="PF00860">
    <property type="entry name" value="Xan_ur_permease"/>
    <property type="match status" value="1"/>
</dbReference>
<dbReference type="PIRSF" id="PIRSF005353">
    <property type="entry name" value="PbuG"/>
    <property type="match status" value="1"/>
</dbReference>
<accession>O34978</accession>
<accession>Q795S2</accession>
<evidence type="ECO:0000255" key="1"/>
<evidence type="ECO:0000269" key="2">
    <source>
    </source>
</evidence>
<evidence type="ECO:0000305" key="3"/>
<name>PBUO_BACSU</name>
<keyword id="KW-1003">Cell membrane</keyword>
<keyword id="KW-0472">Membrane</keyword>
<keyword id="KW-1185">Reference proteome</keyword>
<keyword id="KW-0812">Transmembrane</keyword>
<keyword id="KW-1133">Transmembrane helix</keyword>
<keyword id="KW-0813">Transport</keyword>
<feature type="chain" id="PRO_0000375869" description="Guanine/hypoxanthine permease PbuO">
    <location>
        <begin position="1"/>
        <end position="432"/>
    </location>
</feature>
<feature type="transmembrane region" description="Helical" evidence="1">
    <location>
        <begin position="15"/>
        <end position="35"/>
    </location>
</feature>
<feature type="transmembrane region" description="Helical" evidence="1">
    <location>
        <begin position="51"/>
        <end position="71"/>
    </location>
</feature>
<feature type="transmembrane region" description="Helical" evidence="1">
    <location>
        <begin position="92"/>
        <end position="112"/>
    </location>
</feature>
<feature type="transmembrane region" description="Helical" evidence="1">
    <location>
        <begin position="133"/>
        <end position="153"/>
    </location>
</feature>
<feature type="transmembrane region" description="Helical" evidence="1">
    <location>
        <begin position="174"/>
        <end position="194"/>
    </location>
</feature>
<feature type="transmembrane region" description="Helical" evidence="1">
    <location>
        <begin position="196"/>
        <end position="216"/>
    </location>
</feature>
<feature type="transmembrane region" description="Helical" evidence="1">
    <location>
        <begin position="234"/>
        <end position="254"/>
    </location>
</feature>
<feature type="transmembrane region" description="Helical" evidence="1">
    <location>
        <begin position="340"/>
        <end position="360"/>
    </location>
</feature>
<feature type="transmembrane region" description="Helical" evidence="1">
    <location>
        <begin position="379"/>
        <end position="399"/>
    </location>
</feature>
<feature type="transmembrane region" description="Helical" evidence="1">
    <location>
        <begin position="412"/>
        <end position="432"/>
    </location>
</feature>
<proteinExistence type="evidence at protein level"/>
<sequence>MFHLKEQQTSIKQEIIAGLTTFFTMVYIVVVNPVILANAGVPFDQVFTATIIASIVGTLWMALAANYPIAIAPGMGLNAYLAFHVVSASDGGITYATAFSAVFTAGVLFIILSLTPLRKQLIEAIPNNLKYGITTGIGLFIAFIGLRQAGIVAADESNLVTLGNLHSPGVILTLVGLLISVVLMVLNVSGALFIGMAATALIAFFTGQLHFSKGFMSLPHLPEGLMISNPFTAFGDVIHHGLYAVVFSFLLVTIFDTTGTMIGVAEQAGLMKNNKLPNVRKALLADSTATTVGAVFGTSPTTAFIESSAGVAAGGRTGLTALTVAVMFAASMFFSPLVSALSGIAAITSPALIIVGSLMMGSVSNMNWKEMDEAFPAFLVILAMPLTSSISTGIALGFISYPIVKAARGKWREIHPLVIVFAILFFIQLFIL</sequence>